<protein>
    <recommendedName>
        <fullName evidence="3">Small ribosomal subunit protein eS4</fullName>
    </recommendedName>
    <alternativeName>
        <fullName>40S ribosomal protein S4, X isoform</fullName>
    </alternativeName>
</protein>
<keyword id="KW-0002">3D-structure</keyword>
<keyword id="KW-0007">Acetylation</keyword>
<keyword id="KW-0963">Cytoplasm</keyword>
<keyword id="KW-1017">Isopeptide bond</keyword>
<keyword id="KW-0539">Nucleus</keyword>
<keyword id="KW-0687">Ribonucleoprotein</keyword>
<keyword id="KW-0689">Ribosomal protein</keyword>
<keyword id="KW-0694">RNA-binding</keyword>
<keyword id="KW-0699">rRNA-binding</keyword>
<keyword id="KW-0832">Ubl conjugation</keyword>
<sequence>MARGPKKHLKRVAAPKHWMLDKLTGVFAPRPSTGPHKLRECLPLIIFLRNRLKYALTGDEVKKICMQRFIKIDGKVRTDITYPAGFMDVISIDKTGENFRLIYDTKGRFAVHRITPEEAKYKLCKVRKIFVGTKGIPHLVTHDARTIRYPDPLIKVNDTIQIDLETGKITDFIKFDTGNLCMVTGGANLGRIGVITNRERHPGSFDVVHVKDANGNSFATRLSNIFVIGKGNKPWISLPRGKGIRLTIAEERDKRLAAKQSSG</sequence>
<proteinExistence type="evidence at protein level"/>
<feature type="initiator methionine" description="Removed" evidence="1">
    <location>
        <position position="1"/>
    </location>
</feature>
<feature type="chain" id="PRO_0000130803" description="Small ribosomal subunit protein eS4">
    <location>
        <begin position="2"/>
        <end position="263"/>
    </location>
</feature>
<feature type="domain" description="S4 RNA-binding">
    <location>
        <begin position="42"/>
        <end position="104"/>
    </location>
</feature>
<feature type="modified residue" description="N6-acetyllysine" evidence="2">
    <location>
        <position position="233"/>
    </location>
</feature>
<feature type="cross-link" description="Glycyl lysine isopeptide (Lys-Gly) (interchain with G-Cter in SUMO2)" evidence="1">
    <location>
        <position position="230"/>
    </location>
</feature>
<name>RS4X_CHLAE</name>
<organism>
    <name type="scientific">Chlorocebus aethiops</name>
    <name type="common">Green monkey</name>
    <name type="synonym">Cercopithecus aethiops</name>
    <dbReference type="NCBI Taxonomy" id="9534"/>
    <lineage>
        <taxon>Eukaryota</taxon>
        <taxon>Metazoa</taxon>
        <taxon>Chordata</taxon>
        <taxon>Craniata</taxon>
        <taxon>Vertebrata</taxon>
        <taxon>Euteleostomi</taxon>
        <taxon>Mammalia</taxon>
        <taxon>Eutheria</taxon>
        <taxon>Euarchontoglires</taxon>
        <taxon>Primates</taxon>
        <taxon>Haplorrhini</taxon>
        <taxon>Catarrhini</taxon>
        <taxon>Cercopithecidae</taxon>
        <taxon>Cercopithecinae</taxon>
        <taxon>Chlorocebus</taxon>
    </lineage>
</organism>
<dbReference type="EMBL" id="AB015610">
    <property type="protein sequence ID" value="BAA36501.1"/>
    <property type="molecule type" value="mRNA"/>
</dbReference>
<dbReference type="PDB" id="6MTD">
    <property type="method" value="EM"/>
    <property type="resolution" value="3.30 A"/>
    <property type="chains" value="EE=2-263"/>
</dbReference>
<dbReference type="PDB" id="6MTE">
    <property type="method" value="EM"/>
    <property type="resolution" value="3.40 A"/>
    <property type="chains" value="EE=2-263"/>
</dbReference>
<dbReference type="PDB" id="7ZJW">
    <property type="method" value="EM"/>
    <property type="resolution" value="2.80 A"/>
    <property type="chains" value="SP=1-263"/>
</dbReference>
<dbReference type="PDB" id="7ZJX">
    <property type="method" value="EM"/>
    <property type="resolution" value="3.10 A"/>
    <property type="chains" value="SP=1-263"/>
</dbReference>
<dbReference type="PDBsum" id="6MTD"/>
<dbReference type="PDBsum" id="6MTE"/>
<dbReference type="PDBsum" id="7ZJW"/>
<dbReference type="PDBsum" id="7ZJX"/>
<dbReference type="EMDB" id="EMD-14751"/>
<dbReference type="EMDB" id="EMD-14752"/>
<dbReference type="EMDB" id="EMD-9240"/>
<dbReference type="EMDB" id="EMD-9242"/>
<dbReference type="SMR" id="Q76N24"/>
<dbReference type="IntAct" id="Q76N24">
    <property type="interactions" value="1"/>
</dbReference>
<dbReference type="GO" id="GO:0022627">
    <property type="term" value="C:cytosolic small ribosomal subunit"/>
    <property type="evidence" value="ECO:0007669"/>
    <property type="project" value="TreeGrafter"/>
</dbReference>
<dbReference type="GO" id="GO:0005730">
    <property type="term" value="C:nucleolus"/>
    <property type="evidence" value="ECO:0007669"/>
    <property type="project" value="UniProtKB-SubCell"/>
</dbReference>
<dbReference type="GO" id="GO:1990904">
    <property type="term" value="C:ribonucleoprotein complex"/>
    <property type="evidence" value="ECO:0000250"/>
    <property type="project" value="UniProtKB"/>
</dbReference>
<dbReference type="GO" id="GO:0005840">
    <property type="term" value="C:ribosome"/>
    <property type="evidence" value="ECO:0000250"/>
    <property type="project" value="UniProtKB"/>
</dbReference>
<dbReference type="GO" id="GO:0032040">
    <property type="term" value="C:small-subunit processome"/>
    <property type="evidence" value="ECO:0000250"/>
    <property type="project" value="UniProtKB"/>
</dbReference>
<dbReference type="GO" id="GO:0019843">
    <property type="term" value="F:rRNA binding"/>
    <property type="evidence" value="ECO:0007669"/>
    <property type="project" value="UniProtKB-KW"/>
</dbReference>
<dbReference type="GO" id="GO:0003735">
    <property type="term" value="F:structural constituent of ribosome"/>
    <property type="evidence" value="ECO:0007669"/>
    <property type="project" value="InterPro"/>
</dbReference>
<dbReference type="GO" id="GO:0042274">
    <property type="term" value="P:ribosomal small subunit biogenesis"/>
    <property type="evidence" value="ECO:0000250"/>
    <property type="project" value="UniProtKB"/>
</dbReference>
<dbReference type="GO" id="GO:0006412">
    <property type="term" value="P:translation"/>
    <property type="evidence" value="ECO:0007669"/>
    <property type="project" value="InterPro"/>
</dbReference>
<dbReference type="CDD" id="cd06087">
    <property type="entry name" value="KOW_RPS4"/>
    <property type="match status" value="1"/>
</dbReference>
<dbReference type="CDD" id="cd00165">
    <property type="entry name" value="S4"/>
    <property type="match status" value="1"/>
</dbReference>
<dbReference type="FunFam" id="2.30.30.30:FF:000005">
    <property type="entry name" value="40S ribosomal protein S4"/>
    <property type="match status" value="1"/>
</dbReference>
<dbReference type="FunFam" id="2.40.50.740:FF:000001">
    <property type="entry name" value="40S ribosomal protein S4"/>
    <property type="match status" value="1"/>
</dbReference>
<dbReference type="FunFam" id="3.10.290.10:FF:000051">
    <property type="entry name" value="40S ribosomal protein S4, X isoform"/>
    <property type="match status" value="1"/>
</dbReference>
<dbReference type="Gene3D" id="2.30.30.30">
    <property type="match status" value="1"/>
</dbReference>
<dbReference type="Gene3D" id="2.40.50.740">
    <property type="match status" value="1"/>
</dbReference>
<dbReference type="Gene3D" id="3.10.290.10">
    <property type="entry name" value="RNA-binding S4 domain"/>
    <property type="match status" value="1"/>
</dbReference>
<dbReference type="HAMAP" id="MF_00485">
    <property type="entry name" value="Ribosomal_eS4"/>
    <property type="match status" value="1"/>
</dbReference>
<dbReference type="InterPro" id="IPR005824">
    <property type="entry name" value="KOW"/>
</dbReference>
<dbReference type="InterPro" id="IPR014722">
    <property type="entry name" value="Rib_uL2_dom2"/>
</dbReference>
<dbReference type="InterPro" id="IPR000876">
    <property type="entry name" value="Ribosomal_eS4"/>
</dbReference>
<dbReference type="InterPro" id="IPR032277">
    <property type="entry name" value="Ribosomal_eS4_C"/>
</dbReference>
<dbReference type="InterPro" id="IPR013845">
    <property type="entry name" value="Ribosomal_eS4_central_region"/>
</dbReference>
<dbReference type="InterPro" id="IPR038237">
    <property type="entry name" value="Ribosomal_eS4_central_sf"/>
</dbReference>
<dbReference type="InterPro" id="IPR041982">
    <property type="entry name" value="Ribosomal_eS4_KOW"/>
</dbReference>
<dbReference type="InterPro" id="IPR013843">
    <property type="entry name" value="Ribosomal_eS4_N"/>
</dbReference>
<dbReference type="InterPro" id="IPR018199">
    <property type="entry name" value="Ribosomal_eS4_N_CS"/>
</dbReference>
<dbReference type="InterPro" id="IPR002942">
    <property type="entry name" value="S4_RNA-bd"/>
</dbReference>
<dbReference type="InterPro" id="IPR036986">
    <property type="entry name" value="S4_RNA-bd_sf"/>
</dbReference>
<dbReference type="PANTHER" id="PTHR11581">
    <property type="entry name" value="30S/40S RIBOSOMAL PROTEIN S4"/>
    <property type="match status" value="1"/>
</dbReference>
<dbReference type="PANTHER" id="PTHR11581:SF0">
    <property type="entry name" value="SMALL RIBOSOMAL SUBUNIT PROTEIN ES4"/>
    <property type="match status" value="1"/>
</dbReference>
<dbReference type="Pfam" id="PF16121">
    <property type="entry name" value="40S_S4_C"/>
    <property type="match status" value="1"/>
</dbReference>
<dbReference type="Pfam" id="PF00467">
    <property type="entry name" value="KOW"/>
    <property type="match status" value="1"/>
</dbReference>
<dbReference type="Pfam" id="PF00900">
    <property type="entry name" value="Ribosomal_S4e"/>
    <property type="match status" value="1"/>
</dbReference>
<dbReference type="Pfam" id="PF08071">
    <property type="entry name" value="RS4NT"/>
    <property type="match status" value="1"/>
</dbReference>
<dbReference type="PIRSF" id="PIRSF002116">
    <property type="entry name" value="Ribosomal_S4"/>
    <property type="match status" value="1"/>
</dbReference>
<dbReference type="SMART" id="SM00363">
    <property type="entry name" value="S4"/>
    <property type="match status" value="1"/>
</dbReference>
<dbReference type="PROSITE" id="PS00528">
    <property type="entry name" value="RIBOSOMAL_S4E"/>
    <property type="match status" value="1"/>
</dbReference>
<dbReference type="PROSITE" id="PS50889">
    <property type="entry name" value="S4"/>
    <property type="match status" value="1"/>
</dbReference>
<evidence type="ECO:0000250" key="1">
    <source>
        <dbReference type="UniProtKB" id="P62701"/>
    </source>
</evidence>
<evidence type="ECO:0000250" key="2">
    <source>
        <dbReference type="UniProtKB" id="P62702"/>
    </source>
</evidence>
<evidence type="ECO:0000305" key="3"/>
<comment type="function">
    <text evidence="1">Component of the small ribosomal subunit. The ribosome is a large ribonucleoprotein complex responsible for the synthesis of proteins in the cell. Part of the small subunit (SSU) processome, first precursor of the small eukaryotic ribosomal subunit. During the assembly of the SSU processome in the nucleolus, many ribosome biogenesis factors, an RNA chaperone and ribosomal proteins associate with the nascent pre-rRNA and work in concert to generate RNA folding, modifications, rearrangements and cleavage as well as targeted degradation of pre-ribosomal RNA by the RNA exosome.</text>
</comment>
<comment type="subunit">
    <text evidence="1">Component of the small ribosomal subunit. Part of the small subunit (SSU) processome, composed of more than 70 proteins and the RNA chaperone small nucleolar RNA (snoRNA) U3. Identified in a IGF2BP1-dependent mRNP granule complex containing untranslated mRNAs.</text>
</comment>
<comment type="subcellular location">
    <subcellularLocation>
        <location evidence="1">Cytoplasm</location>
    </subcellularLocation>
    <subcellularLocation>
        <location evidence="1">Nucleus</location>
        <location evidence="1">Nucleolus</location>
    </subcellularLocation>
    <text evidence="1">Localized in cytoplasmic mRNP granules containing untranslated mRNAs.</text>
</comment>
<comment type="similarity">
    <text evidence="3">Belongs to the eukaryotic ribosomal protein eS4 family.</text>
</comment>
<reference key="1">
    <citation type="journal article" date="1999" name="Folia Primatol.">
        <title>Ribosomal protein S4 gene of African green monkey (Cercopithecus aethiops).</title>
        <authorList>
            <person name="Kim H.-S."/>
        </authorList>
    </citation>
    <scope>NUCLEOTIDE SEQUENCE [MRNA]</scope>
</reference>
<accession>Q76N24</accession>
<gene>
    <name type="primary">RPS4X</name>
</gene>